<protein>
    <recommendedName>
        <fullName evidence="1">Probable cell division protein WhiA</fullName>
    </recommendedName>
</protein>
<feature type="chain" id="PRO_0000376508" description="Probable cell division protein WhiA">
    <location>
        <begin position="1"/>
        <end position="305"/>
    </location>
</feature>
<feature type="DNA-binding region" description="H-T-H motif" evidence="1">
    <location>
        <begin position="269"/>
        <end position="302"/>
    </location>
</feature>
<dbReference type="EMBL" id="AM406671">
    <property type="protein sequence ID" value="CAL98130.1"/>
    <property type="molecule type" value="Genomic_DNA"/>
</dbReference>
<dbReference type="RefSeq" id="WP_011675974.1">
    <property type="nucleotide sequence ID" value="NC_009004.1"/>
</dbReference>
<dbReference type="SMR" id="A2RLG3"/>
<dbReference type="STRING" id="416870.llmg_1555"/>
<dbReference type="GeneID" id="61109269"/>
<dbReference type="KEGG" id="llm:llmg_1555"/>
<dbReference type="eggNOG" id="COG1481">
    <property type="taxonomic scope" value="Bacteria"/>
</dbReference>
<dbReference type="HOGENOM" id="CLU_053282_0_0_9"/>
<dbReference type="OrthoDB" id="401278at2"/>
<dbReference type="PhylomeDB" id="A2RLG3"/>
<dbReference type="Proteomes" id="UP000000364">
    <property type="component" value="Chromosome"/>
</dbReference>
<dbReference type="GO" id="GO:0003677">
    <property type="term" value="F:DNA binding"/>
    <property type="evidence" value="ECO:0007669"/>
    <property type="project" value="UniProtKB-UniRule"/>
</dbReference>
<dbReference type="GO" id="GO:0004519">
    <property type="term" value="F:endonuclease activity"/>
    <property type="evidence" value="ECO:0007669"/>
    <property type="project" value="InterPro"/>
</dbReference>
<dbReference type="GO" id="GO:0051301">
    <property type="term" value="P:cell division"/>
    <property type="evidence" value="ECO:0007669"/>
    <property type="project" value="UniProtKB-UniRule"/>
</dbReference>
<dbReference type="GO" id="GO:0043937">
    <property type="term" value="P:regulation of sporulation"/>
    <property type="evidence" value="ECO:0007669"/>
    <property type="project" value="InterPro"/>
</dbReference>
<dbReference type="Gene3D" id="3.10.28.10">
    <property type="entry name" value="Homing endonucleases"/>
    <property type="match status" value="1"/>
</dbReference>
<dbReference type="HAMAP" id="MF_01420">
    <property type="entry name" value="HTH_type_WhiA"/>
    <property type="match status" value="1"/>
</dbReference>
<dbReference type="InterPro" id="IPR027434">
    <property type="entry name" value="Homing_endonucl"/>
</dbReference>
<dbReference type="InterPro" id="IPR004042">
    <property type="entry name" value="Intein_endonuc_central"/>
</dbReference>
<dbReference type="InterPro" id="IPR018478">
    <property type="entry name" value="Sporu_reg_WhiA_N_dom"/>
</dbReference>
<dbReference type="InterPro" id="IPR003802">
    <property type="entry name" value="Sporulation_regulator_WhiA"/>
</dbReference>
<dbReference type="InterPro" id="IPR023054">
    <property type="entry name" value="Sporulation_regulator_WhiA_C"/>
</dbReference>
<dbReference type="InterPro" id="IPR039518">
    <property type="entry name" value="WhiA_LAGLIDADG_dom"/>
</dbReference>
<dbReference type="NCBIfam" id="TIGR00647">
    <property type="entry name" value="DNA_bind_WhiA"/>
    <property type="match status" value="1"/>
</dbReference>
<dbReference type="PANTHER" id="PTHR37307">
    <property type="entry name" value="CELL DIVISION PROTEIN WHIA-RELATED"/>
    <property type="match status" value="1"/>
</dbReference>
<dbReference type="PANTHER" id="PTHR37307:SF1">
    <property type="entry name" value="CELL DIVISION PROTEIN WHIA-RELATED"/>
    <property type="match status" value="1"/>
</dbReference>
<dbReference type="Pfam" id="PF02650">
    <property type="entry name" value="HTH_WhiA"/>
    <property type="match status" value="1"/>
</dbReference>
<dbReference type="Pfam" id="PF14527">
    <property type="entry name" value="LAGLIDADG_WhiA"/>
    <property type="match status" value="1"/>
</dbReference>
<dbReference type="Pfam" id="PF10298">
    <property type="entry name" value="WhiA_N"/>
    <property type="match status" value="1"/>
</dbReference>
<dbReference type="SUPFAM" id="SSF55608">
    <property type="entry name" value="Homing endonucleases"/>
    <property type="match status" value="1"/>
</dbReference>
<dbReference type="PROSITE" id="PS50819">
    <property type="entry name" value="INTEIN_ENDONUCLEASE"/>
    <property type="match status" value="1"/>
</dbReference>
<evidence type="ECO:0000255" key="1">
    <source>
        <dbReference type="HAMAP-Rule" id="MF_01420"/>
    </source>
</evidence>
<gene>
    <name evidence="1" type="primary">whiA</name>
    <name type="ordered locus">llmg_1555</name>
</gene>
<accession>A2RLG3</accession>
<reference key="1">
    <citation type="journal article" date="2007" name="J. Bacteriol.">
        <title>The complete genome sequence of the lactic acid bacterial paradigm Lactococcus lactis subsp. cremoris MG1363.</title>
        <authorList>
            <person name="Wegmann U."/>
            <person name="O'Connell-Motherway M."/>
            <person name="Zomer A."/>
            <person name="Buist G."/>
            <person name="Shearman C."/>
            <person name="Canchaya C."/>
            <person name="Ventura M."/>
            <person name="Goesmann A."/>
            <person name="Gasson M.J."/>
            <person name="Kuipers O.P."/>
            <person name="van Sinderen D."/>
            <person name="Kok J."/>
        </authorList>
    </citation>
    <scope>NUCLEOTIDE SEQUENCE [LARGE SCALE GENOMIC DNA]</scope>
    <source>
        <strain>MG1363</strain>
    </source>
</reference>
<organism>
    <name type="scientific">Lactococcus lactis subsp. cremoris (strain MG1363)</name>
    <dbReference type="NCBI Taxonomy" id="416870"/>
    <lineage>
        <taxon>Bacteria</taxon>
        <taxon>Bacillati</taxon>
        <taxon>Bacillota</taxon>
        <taxon>Bacilli</taxon>
        <taxon>Lactobacillales</taxon>
        <taxon>Streptococcaceae</taxon>
        <taxon>Lactococcus</taxon>
        <taxon>Lactococcus cremoris subsp. cremoris</taxon>
    </lineage>
</organism>
<proteinExistence type="inferred from homology"/>
<name>WHIA_LACLM</name>
<comment type="function">
    <text evidence="1">Involved in cell division and chromosome segregation.</text>
</comment>
<comment type="similarity">
    <text evidence="1">Belongs to the WhiA family.</text>
</comment>
<keyword id="KW-0131">Cell cycle</keyword>
<keyword id="KW-0132">Cell division</keyword>
<keyword id="KW-0238">DNA-binding</keyword>
<sequence length="305" mass="34548">MSFTSDVKKELTRNLATTGALLALVRMNGSVGIFNGLTLSITTENAGTAKYIYQMLQELYEIHAEIRVHQKTTLSKNRVYTVFITEGAGELLDELSLADSLMLDNGVPEFVKNDEFIKKDYLRGAFLSAGALHNPEKGEYQLSIANVYQEHAEDLQEIFRDFGLNARVIERKNRWILYLSKAEEIMDFLTLIGAMKARLKFEEAKIMREMRGLANRQSNFENANIAKSVMAAQEAIDAIQFLNEKKELEQLPPSLKEIARLRLENPEATIKELGELLDPPLGKSGVNHRLRKLVERSNDLKKVES</sequence>